<evidence type="ECO:0000250" key="1"/>
<evidence type="ECO:0000256" key="2">
    <source>
        <dbReference type="SAM" id="MobiDB-lite"/>
    </source>
</evidence>
<evidence type="ECO:0000269" key="3">
    <source>
    </source>
</evidence>
<evidence type="ECO:0000305" key="4"/>
<reference key="1">
    <citation type="journal article" date="1989" name="Arch. Virol.">
        <title>Nucleotide sequence of segment S9 of the rice dwarf virus genome.</title>
        <authorList>
            <person name="Fukumoto F."/>
            <person name="Omura T."/>
            <person name="Minobe Y."/>
        </authorList>
    </citation>
    <scope>NUCLEOTIDE SEQUENCE [GENOMIC RNA]</scope>
</reference>
<reference key="2">
    <citation type="journal article" date="2003" name="Arch. Virol.">
        <title>A minor outer capsid protein, P9, of Rice dwarf virus.</title>
        <authorList>
            <person name="Zhong B."/>
            <person name="Kikuchi A."/>
            <person name="Moriyasu Y."/>
            <person name="Higashi T."/>
            <person name="Hagiwara K."/>
            <person name="Omura T."/>
        </authorList>
    </citation>
    <scope>IDENTIFICATION</scope>
    <scope>FUNCTION</scope>
    <scope>SUBCELLULAR LOCATION</scope>
</reference>
<keyword id="KW-0167">Capsid protein</keyword>
<keyword id="KW-1035">Host cytoplasm</keyword>
<keyword id="KW-1152">Outer capsid protein</keyword>
<keyword id="KW-0946">Virion</keyword>
<feature type="chain" id="PRO_0000222795" description="Minor outer capsid protein P9">
    <location>
        <begin position="1"/>
        <end position="351"/>
    </location>
</feature>
<feature type="region of interest" description="Disordered" evidence="2">
    <location>
        <begin position="246"/>
        <end position="308"/>
    </location>
</feature>
<feature type="compositionally biased region" description="Basic and acidic residues" evidence="2">
    <location>
        <begin position="285"/>
        <end position="297"/>
    </location>
</feature>
<dbReference type="EMBL" id="D13404">
    <property type="protein sequence ID" value="BAA02668.1"/>
    <property type="molecule type" value="Genomic_RNA"/>
</dbReference>
<dbReference type="SMR" id="Q85446"/>
<dbReference type="GO" id="GO:0030430">
    <property type="term" value="C:host cell cytoplasm"/>
    <property type="evidence" value="ECO:0007669"/>
    <property type="project" value="UniProtKB-SubCell"/>
</dbReference>
<dbReference type="GO" id="GO:0039624">
    <property type="term" value="C:viral outer capsid"/>
    <property type="evidence" value="ECO:0007669"/>
    <property type="project" value="UniProtKB-KW"/>
</dbReference>
<dbReference type="InterPro" id="IPR008776">
    <property type="entry name" value="Phyto_Pns9_10"/>
</dbReference>
<dbReference type="Pfam" id="PF05878">
    <property type="entry name" value="Phyto_Pns9_10"/>
    <property type="match status" value="1"/>
</dbReference>
<comment type="function">
    <text evidence="3">Minor outer capsid protein.</text>
</comment>
<comment type="subcellular location">
    <subcellularLocation>
        <location evidence="4">Virion</location>
    </subcellularLocation>
    <subcellularLocation>
        <location evidence="1">Host cytoplasm</location>
    </subcellularLocation>
    <text evidence="1">Found in the peripheral regions of spherical cytoplasmic structures, called virus factories, that appear early after infection and are the site of viral replication and packaging.</text>
</comment>
<comment type="similarity">
    <text evidence="4">Belongs to the phytoreovirus minor outer capsid protein P9 family.</text>
</comment>
<proteinExistence type="inferred from homology"/>
<organism>
    <name type="scientific">Rice dwarf virus (isolate O)</name>
    <name type="common">RDV</name>
    <dbReference type="NCBI Taxonomy" id="142805"/>
    <lineage>
        <taxon>Viruses</taxon>
        <taxon>Riboviria</taxon>
        <taxon>Orthornavirae</taxon>
        <taxon>Duplornaviricota</taxon>
        <taxon>Resentoviricetes</taxon>
        <taxon>Reovirales</taxon>
        <taxon>Sedoreoviridae</taxon>
        <taxon>Phytoreovirus</taxon>
        <taxon>Rice dwarf virus</taxon>
    </lineage>
</organism>
<name>P9_RDVO</name>
<accession>Q85446</accession>
<organismHost>
    <name type="scientific">Alopecurus aequalis</name>
    <dbReference type="NCBI Taxonomy" id="114194"/>
</organismHost>
<organismHost>
    <name type="scientific">Echinochloa crus-galli</name>
    <name type="common">Barnyard grass</name>
    <name type="synonym">Panicum crus-galli</name>
    <dbReference type="NCBI Taxonomy" id="90397"/>
</organismHost>
<organismHost>
    <name type="scientific">Nephotettix cincticeps</name>
    <name type="common">Green rice leafhopper</name>
    <name type="synonym">Selenocephalus cincticeps</name>
    <dbReference type="NCBI Taxonomy" id="94400"/>
</organismHost>
<organismHost>
    <name type="scientific">Oryza sativa</name>
    <name type="common">Rice</name>
    <dbReference type="NCBI Taxonomy" id="4530"/>
</organismHost>
<organismHost>
    <name type="scientific">Paspalum</name>
    <dbReference type="NCBI Taxonomy" id="147271"/>
</organismHost>
<sequence>MGKLQDGIAIKRINDAITTFKNYKLDELEQGGSMAINTLSNVRAHVGLAWPAILRNCLIHTSSHLGFMKFMIDIATTWKVGAFTLLGSVGDEDPFTDVDLIYTKTCLHLGLKDNDFLQFPEEFAYEANSFLEAQSMNARVDMLTGVHNIEDKYVFRMQSISKFLKAYYTASEDVAYLTGFIKPDDSKDSILSAELLKAQVTSEVLRVRNLITTKIQKYINLYEDSQLPHFRQAALSYTQDWDVDGGVPAALPQPDITDDESPVTNPGPSAPPVSKGADQPEDEEMIRKKVETSKDAPPKAVPSGNVSARGIPAFLEDDMSEMDAPDGFHDYLTREHENNFDLAQLGLAPSV</sequence>
<protein>
    <recommendedName>
        <fullName>Minor outer capsid protein P9</fullName>
    </recommendedName>
</protein>